<sequence length="317" mass="33814">MTINDSAISEQGMCEEEQVARIAWFYYHDGLTQSEISDRLGLTRLKVSRLLEKGHQSGIIRVQINSRFEGCLEYETQLRRQFSLQHVRVIPGLADADVGGRLGIGAAHMLMSLLQPQQMLAIGFGEATMNTLQRLSGFISSQQIRLVTLSGGVGSYMTGIGQLNAACSVNIIPAPLRASSADIARTLKNENCVKDVLLAAQAADVAIVGIGAVSQQDDATIIRSGYISQGEQLMIGRKGAVGDILGYFFDAKGDVVTDIKIHNELIGLPLSSLKTIPVRVGVAGGENKAEAIAAAMKGGYINALVTDQDTAAAILRS</sequence>
<comment type="function">
    <text evidence="1">Transcriptional regulator that represses the expression of the lsr operon in the absence of the quorum-sensing signaling molecule autoinducer 2 (AI-2) (By similarity). It also represses the expression of the lsrRK operon (By similarity). Acts by binding directly to the lsrA and lsrR promoter regions (By similarity). In the presence of phosphorylated autoinducer-2 (phospho-AI-2), LsrR is inactivated, leading to the transcription of the genes (By similarity).</text>
</comment>
<comment type="activity regulation">
    <text evidence="1">Inactivated by phosphorylated autoinducer-2 (phospho-AI-2) (By similarity). Phospho-AI-2 acts by binding to LsrR, which is then unable to bind to the promoter regions, allowing the transcription of the target genes (By similarity).</text>
</comment>
<comment type="subcellular location">
    <subcellularLocation>
        <location evidence="2">Cytoplasm</location>
    </subcellularLocation>
</comment>
<comment type="similarity">
    <text evidence="2">Belongs to the SorC transcriptional regulatory family.</text>
</comment>
<dbReference type="EMBL" id="CP000800">
    <property type="protein sequence ID" value="ABV20760.1"/>
    <property type="molecule type" value="Genomic_DNA"/>
</dbReference>
<dbReference type="RefSeq" id="WP_000154340.1">
    <property type="nucleotide sequence ID" value="NC_009801.1"/>
</dbReference>
<dbReference type="SMR" id="A7ZLX0"/>
<dbReference type="GeneID" id="75202160"/>
<dbReference type="KEGG" id="ecw:EcE24377A_1713"/>
<dbReference type="HOGENOM" id="CLU_054506_0_1_6"/>
<dbReference type="Proteomes" id="UP000001122">
    <property type="component" value="Chromosome"/>
</dbReference>
<dbReference type="GO" id="GO:0005737">
    <property type="term" value="C:cytoplasm"/>
    <property type="evidence" value="ECO:0007669"/>
    <property type="project" value="UniProtKB-SubCell"/>
</dbReference>
<dbReference type="GO" id="GO:0030246">
    <property type="term" value="F:carbohydrate binding"/>
    <property type="evidence" value="ECO:0007669"/>
    <property type="project" value="InterPro"/>
</dbReference>
<dbReference type="GO" id="GO:0003677">
    <property type="term" value="F:DNA binding"/>
    <property type="evidence" value="ECO:0007669"/>
    <property type="project" value="UniProtKB-KW"/>
</dbReference>
<dbReference type="FunFam" id="1.10.10.10:FF:000195">
    <property type="entry name" value="LsrR family transcriptional regulator"/>
    <property type="match status" value="1"/>
</dbReference>
<dbReference type="FunFam" id="3.40.50.1360:FF:000012">
    <property type="entry name" value="LsrR family transcriptional regulator"/>
    <property type="match status" value="1"/>
</dbReference>
<dbReference type="Gene3D" id="3.40.50.1360">
    <property type="match status" value="1"/>
</dbReference>
<dbReference type="Gene3D" id="1.10.10.10">
    <property type="entry name" value="Winged helix-like DNA-binding domain superfamily/Winged helix DNA-binding domain"/>
    <property type="match status" value="1"/>
</dbReference>
<dbReference type="InterPro" id="IPR037171">
    <property type="entry name" value="NagB/RpiA_transferase-like"/>
</dbReference>
<dbReference type="InterPro" id="IPR051054">
    <property type="entry name" value="SorC_transcr_regulators"/>
</dbReference>
<dbReference type="InterPro" id="IPR007324">
    <property type="entry name" value="Sugar-bd_dom_put"/>
</dbReference>
<dbReference type="InterPro" id="IPR036388">
    <property type="entry name" value="WH-like_DNA-bd_sf"/>
</dbReference>
<dbReference type="NCBIfam" id="NF011947">
    <property type="entry name" value="PRK15418.1"/>
    <property type="match status" value="1"/>
</dbReference>
<dbReference type="PANTHER" id="PTHR34294:SF1">
    <property type="entry name" value="TRANSCRIPTIONAL REGULATOR LSRR"/>
    <property type="match status" value="1"/>
</dbReference>
<dbReference type="PANTHER" id="PTHR34294">
    <property type="entry name" value="TRANSCRIPTIONAL REGULATOR-RELATED"/>
    <property type="match status" value="1"/>
</dbReference>
<dbReference type="Pfam" id="PF04198">
    <property type="entry name" value="Sugar-bind"/>
    <property type="match status" value="1"/>
</dbReference>
<dbReference type="SUPFAM" id="SSF100950">
    <property type="entry name" value="NagB/RpiA/CoA transferase-like"/>
    <property type="match status" value="1"/>
</dbReference>
<keyword id="KW-0963">Cytoplasm</keyword>
<keyword id="KW-0238">DNA-binding</keyword>
<keyword id="KW-1185">Reference proteome</keyword>
<keyword id="KW-0678">Repressor</keyword>
<keyword id="KW-0804">Transcription</keyword>
<keyword id="KW-0805">Transcription regulation</keyword>
<proteinExistence type="inferred from homology"/>
<evidence type="ECO:0000250" key="1">
    <source>
        <dbReference type="UniProtKB" id="P76141"/>
    </source>
</evidence>
<evidence type="ECO:0000305" key="2"/>
<organism>
    <name type="scientific">Escherichia coli O139:H28 (strain E24377A / ETEC)</name>
    <dbReference type="NCBI Taxonomy" id="331111"/>
    <lineage>
        <taxon>Bacteria</taxon>
        <taxon>Pseudomonadati</taxon>
        <taxon>Pseudomonadota</taxon>
        <taxon>Gammaproteobacteria</taxon>
        <taxon>Enterobacterales</taxon>
        <taxon>Enterobacteriaceae</taxon>
        <taxon>Escherichia</taxon>
    </lineage>
</organism>
<accession>A7ZLX0</accession>
<gene>
    <name type="primary">lsrR</name>
    <name type="ordered locus">EcE24377A_1713</name>
</gene>
<protein>
    <recommendedName>
        <fullName evidence="1">Transcriptional regulator LsrR</fullName>
    </recommendedName>
</protein>
<reference key="1">
    <citation type="journal article" date="2008" name="J. Bacteriol.">
        <title>The pangenome structure of Escherichia coli: comparative genomic analysis of E. coli commensal and pathogenic isolates.</title>
        <authorList>
            <person name="Rasko D.A."/>
            <person name="Rosovitz M.J."/>
            <person name="Myers G.S.A."/>
            <person name="Mongodin E.F."/>
            <person name="Fricke W.F."/>
            <person name="Gajer P."/>
            <person name="Crabtree J."/>
            <person name="Sebaihia M."/>
            <person name="Thomson N.R."/>
            <person name="Chaudhuri R."/>
            <person name="Henderson I.R."/>
            <person name="Sperandio V."/>
            <person name="Ravel J."/>
        </authorList>
    </citation>
    <scope>NUCLEOTIDE SEQUENCE [LARGE SCALE GENOMIC DNA]</scope>
    <source>
        <strain>E24377A / ETEC</strain>
    </source>
</reference>
<name>LSRR_ECO24</name>
<feature type="chain" id="PRO_0000351614" description="Transcriptional regulator LsrR">
    <location>
        <begin position="1"/>
        <end position="317"/>
    </location>
</feature>
<feature type="DNA-binding region" description="H-T-H motif" evidence="2">
    <location>
        <begin position="33"/>
        <end position="56"/>
    </location>
</feature>